<evidence type="ECO:0000255" key="1">
    <source>
        <dbReference type="HAMAP-Rule" id="MF_00161"/>
    </source>
</evidence>
<gene>
    <name evidence="1" type="primary">lspA</name>
    <name type="ordered locus">PA14_60360</name>
</gene>
<feature type="chain" id="PRO_0000289410" description="Lipoprotein signal peptidase">
    <location>
        <begin position="1"/>
        <end position="169"/>
    </location>
</feature>
<feature type="transmembrane region" description="Helical" evidence="1">
    <location>
        <begin position="10"/>
        <end position="30"/>
    </location>
</feature>
<feature type="transmembrane region" description="Helical" evidence="1">
    <location>
        <begin position="40"/>
        <end position="60"/>
    </location>
</feature>
<feature type="transmembrane region" description="Helical" evidence="1">
    <location>
        <begin position="68"/>
        <end position="88"/>
    </location>
</feature>
<feature type="transmembrane region" description="Helical" evidence="1">
    <location>
        <begin position="94"/>
        <end position="114"/>
    </location>
</feature>
<feature type="transmembrane region" description="Helical" evidence="1">
    <location>
        <begin position="135"/>
        <end position="155"/>
    </location>
</feature>
<feature type="active site" evidence="1">
    <location>
        <position position="124"/>
    </location>
</feature>
<feature type="active site" evidence="1">
    <location>
        <position position="143"/>
    </location>
</feature>
<organism>
    <name type="scientific">Pseudomonas aeruginosa (strain UCBPP-PA14)</name>
    <dbReference type="NCBI Taxonomy" id="208963"/>
    <lineage>
        <taxon>Bacteria</taxon>
        <taxon>Pseudomonadati</taxon>
        <taxon>Pseudomonadota</taxon>
        <taxon>Gammaproteobacteria</taxon>
        <taxon>Pseudomonadales</taxon>
        <taxon>Pseudomonadaceae</taxon>
        <taxon>Pseudomonas</taxon>
    </lineage>
</organism>
<reference key="1">
    <citation type="journal article" date="2006" name="Genome Biol.">
        <title>Genomic analysis reveals that Pseudomonas aeruginosa virulence is combinatorial.</title>
        <authorList>
            <person name="Lee D.G."/>
            <person name="Urbach J.M."/>
            <person name="Wu G."/>
            <person name="Liberati N.T."/>
            <person name="Feinbaum R.L."/>
            <person name="Miyata S."/>
            <person name="Diggins L.T."/>
            <person name="He J."/>
            <person name="Saucier M."/>
            <person name="Deziel E."/>
            <person name="Friedman L."/>
            <person name="Li L."/>
            <person name="Grills G."/>
            <person name="Montgomery K."/>
            <person name="Kucherlapati R."/>
            <person name="Rahme L.G."/>
            <person name="Ausubel F.M."/>
        </authorList>
    </citation>
    <scope>NUCLEOTIDE SEQUENCE [LARGE SCALE GENOMIC DNA]</scope>
    <source>
        <strain>UCBPP-PA14</strain>
    </source>
</reference>
<accession>Q02GB8</accession>
<keyword id="KW-0064">Aspartyl protease</keyword>
<keyword id="KW-0997">Cell inner membrane</keyword>
<keyword id="KW-1003">Cell membrane</keyword>
<keyword id="KW-0378">Hydrolase</keyword>
<keyword id="KW-0472">Membrane</keyword>
<keyword id="KW-0645">Protease</keyword>
<keyword id="KW-0812">Transmembrane</keyword>
<keyword id="KW-1133">Transmembrane helix</keyword>
<comment type="function">
    <text evidence="1">This protein specifically catalyzes the removal of signal peptides from prolipoproteins.</text>
</comment>
<comment type="catalytic activity">
    <reaction evidence="1">
        <text>Release of signal peptides from bacterial membrane prolipoproteins. Hydrolyzes -Xaa-Yaa-Zaa-|-(S,diacylglyceryl)Cys-, in which Xaa is hydrophobic (preferably Leu), and Yaa (Ala or Ser) and Zaa (Gly or Ala) have small, neutral side chains.</text>
        <dbReference type="EC" id="3.4.23.36"/>
    </reaction>
</comment>
<comment type="pathway">
    <text evidence="1">Protein modification; lipoprotein biosynthesis (signal peptide cleavage).</text>
</comment>
<comment type="subcellular location">
    <subcellularLocation>
        <location evidence="1">Cell inner membrane</location>
        <topology evidence="1">Multi-pass membrane protein</topology>
    </subcellularLocation>
</comment>
<comment type="similarity">
    <text evidence="1">Belongs to the peptidase A8 family.</text>
</comment>
<protein>
    <recommendedName>
        <fullName evidence="1">Lipoprotein signal peptidase</fullName>
        <ecNumber evidence="1">3.4.23.36</ecNumber>
    </recommendedName>
    <alternativeName>
        <fullName evidence="1">Prolipoprotein signal peptidase</fullName>
    </alternativeName>
    <alternativeName>
        <fullName evidence="1">Signal peptidase II</fullName>
        <shortName evidence="1">SPase II</shortName>
    </alternativeName>
</protein>
<sequence length="169" mass="19051">MPEVDRFGRLPWLWITVLVFVLDQLSKAFFQAELSMYQQIVVIPDLFSWTLAYNTGAAFSFLADSSGWQRWLFALIAIVVSAILVVWLKRLKKGETWLAIALALVLGGALGNLYDRMVLGHVVDFILVHWQNRWYFPAFNLADSAITVGAVMLALDMFRSKKSGEAAHG</sequence>
<dbReference type="EC" id="3.4.23.36" evidence="1"/>
<dbReference type="EMBL" id="CP000438">
    <property type="protein sequence ID" value="ABJ13938.1"/>
    <property type="molecule type" value="Genomic_DNA"/>
</dbReference>
<dbReference type="RefSeq" id="WP_003094728.1">
    <property type="nucleotide sequence ID" value="NZ_CP034244.1"/>
</dbReference>
<dbReference type="SMR" id="Q02GB8"/>
<dbReference type="KEGG" id="pau:PA14_60360"/>
<dbReference type="PseudoCAP" id="PA14_60360"/>
<dbReference type="HOGENOM" id="CLU_083252_4_0_6"/>
<dbReference type="BioCyc" id="PAER208963:G1G74-5103-MONOMER"/>
<dbReference type="UniPathway" id="UPA00665"/>
<dbReference type="Proteomes" id="UP000000653">
    <property type="component" value="Chromosome"/>
</dbReference>
<dbReference type="GO" id="GO:0005886">
    <property type="term" value="C:plasma membrane"/>
    <property type="evidence" value="ECO:0007669"/>
    <property type="project" value="UniProtKB-SubCell"/>
</dbReference>
<dbReference type="GO" id="GO:0004190">
    <property type="term" value="F:aspartic-type endopeptidase activity"/>
    <property type="evidence" value="ECO:0007669"/>
    <property type="project" value="UniProtKB-UniRule"/>
</dbReference>
<dbReference type="GO" id="GO:0006508">
    <property type="term" value="P:proteolysis"/>
    <property type="evidence" value="ECO:0007669"/>
    <property type="project" value="UniProtKB-KW"/>
</dbReference>
<dbReference type="HAMAP" id="MF_00161">
    <property type="entry name" value="LspA"/>
    <property type="match status" value="1"/>
</dbReference>
<dbReference type="InterPro" id="IPR001872">
    <property type="entry name" value="Peptidase_A8"/>
</dbReference>
<dbReference type="NCBIfam" id="TIGR00077">
    <property type="entry name" value="lspA"/>
    <property type="match status" value="1"/>
</dbReference>
<dbReference type="PANTHER" id="PTHR33695">
    <property type="entry name" value="LIPOPROTEIN SIGNAL PEPTIDASE"/>
    <property type="match status" value="1"/>
</dbReference>
<dbReference type="PANTHER" id="PTHR33695:SF1">
    <property type="entry name" value="LIPOPROTEIN SIGNAL PEPTIDASE"/>
    <property type="match status" value="1"/>
</dbReference>
<dbReference type="Pfam" id="PF01252">
    <property type="entry name" value="Peptidase_A8"/>
    <property type="match status" value="1"/>
</dbReference>
<dbReference type="PRINTS" id="PR00781">
    <property type="entry name" value="LIPOSIGPTASE"/>
</dbReference>
<dbReference type="PROSITE" id="PS00855">
    <property type="entry name" value="SPASE_II"/>
    <property type="match status" value="1"/>
</dbReference>
<name>LSPA_PSEAB</name>
<proteinExistence type="inferred from homology"/>